<feature type="chain" id="PRO_0000381122" description="8-amino-7-oxononanoate synthase">
    <location>
        <begin position="1"/>
        <end position="391"/>
    </location>
</feature>
<feature type="binding site" evidence="1">
    <location>
        <begin position="108"/>
        <end position="109"/>
    </location>
    <ligand>
        <name>pyridoxal 5'-phosphate</name>
        <dbReference type="ChEBI" id="CHEBI:597326"/>
    </ligand>
</feature>
<feature type="binding site" evidence="1">
    <location>
        <position position="133"/>
    </location>
    <ligand>
        <name>substrate</name>
    </ligand>
</feature>
<feature type="binding site" evidence="1">
    <location>
        <position position="180"/>
    </location>
    <ligand>
        <name>pyridoxal 5'-phosphate</name>
        <dbReference type="ChEBI" id="CHEBI:597326"/>
    </ligand>
</feature>
<feature type="binding site" evidence="1">
    <location>
        <position position="208"/>
    </location>
    <ligand>
        <name>pyridoxal 5'-phosphate</name>
        <dbReference type="ChEBI" id="CHEBI:597326"/>
    </ligand>
</feature>
<feature type="binding site" evidence="1">
    <location>
        <position position="236"/>
    </location>
    <ligand>
        <name>pyridoxal 5'-phosphate</name>
        <dbReference type="ChEBI" id="CHEBI:597326"/>
    </ligand>
</feature>
<feature type="binding site" evidence="1">
    <location>
        <position position="353"/>
    </location>
    <ligand>
        <name>substrate</name>
    </ligand>
</feature>
<feature type="modified residue" description="N6-(pyridoxal phosphate)lysine" evidence="1">
    <location>
        <position position="239"/>
    </location>
</feature>
<proteinExistence type="inferred from homology"/>
<reference key="1">
    <citation type="submission" date="2007-05" db="EMBL/GenBank/DDBJ databases">
        <title>Complete sequence of Thermosipho melanesiensis BI429.</title>
        <authorList>
            <consortium name="US DOE Joint Genome Institute"/>
            <person name="Copeland A."/>
            <person name="Lucas S."/>
            <person name="Lapidus A."/>
            <person name="Barry K."/>
            <person name="Glavina del Rio T."/>
            <person name="Dalin E."/>
            <person name="Tice H."/>
            <person name="Pitluck S."/>
            <person name="Chertkov O."/>
            <person name="Brettin T."/>
            <person name="Bruce D."/>
            <person name="Detter J.C."/>
            <person name="Han C."/>
            <person name="Schmutz J."/>
            <person name="Larimer F."/>
            <person name="Land M."/>
            <person name="Hauser L."/>
            <person name="Kyrpides N."/>
            <person name="Mikhailova N."/>
            <person name="Nelson K."/>
            <person name="Gogarten J.P."/>
            <person name="Noll K."/>
            <person name="Richardson P."/>
        </authorList>
    </citation>
    <scope>NUCLEOTIDE SEQUENCE [LARGE SCALE GENOMIC DNA]</scope>
    <source>
        <strain>DSM 12029 / CIP 104789 / BI429</strain>
    </source>
</reference>
<comment type="function">
    <text evidence="1">Catalyzes the decarboxylative condensation of pimeloyl-[acyl-carrier protein] and L-alanine to produce 8-amino-7-oxononanoate (AON), [acyl-carrier protein], and carbon dioxide.</text>
</comment>
<comment type="catalytic activity">
    <reaction evidence="1">
        <text>6-carboxyhexanoyl-[ACP] + L-alanine + H(+) = (8S)-8-amino-7-oxononanoate + holo-[ACP] + CO2</text>
        <dbReference type="Rhea" id="RHEA:42288"/>
        <dbReference type="Rhea" id="RHEA-COMP:9685"/>
        <dbReference type="Rhea" id="RHEA-COMP:9955"/>
        <dbReference type="ChEBI" id="CHEBI:15378"/>
        <dbReference type="ChEBI" id="CHEBI:16526"/>
        <dbReference type="ChEBI" id="CHEBI:57972"/>
        <dbReference type="ChEBI" id="CHEBI:64479"/>
        <dbReference type="ChEBI" id="CHEBI:78846"/>
        <dbReference type="ChEBI" id="CHEBI:149468"/>
        <dbReference type="EC" id="2.3.1.47"/>
    </reaction>
</comment>
<comment type="cofactor">
    <cofactor evidence="1">
        <name>pyridoxal 5'-phosphate</name>
        <dbReference type="ChEBI" id="CHEBI:597326"/>
    </cofactor>
</comment>
<comment type="pathway">
    <text evidence="1">Cofactor biosynthesis; biotin biosynthesis.</text>
</comment>
<comment type="subunit">
    <text evidence="1">Homodimer.</text>
</comment>
<comment type="similarity">
    <text evidence="1">Belongs to the class-II pyridoxal-phosphate-dependent aminotransferase family. BioF subfamily.</text>
</comment>
<sequence>MFDYSIFAKEIDELKNQGLYTYIRTLESPQGAWLVIDGKKVLNLCSNNYLGFANEERLKNAAKQAVEKWGVGPGAVRTIAGTFSLHNELEETLAKFKKVEATIFLQSGFVANQAVIPAITNEEDAILSDELNHASIIDGVRLSKAKRFVWKHRDIKDLEEKLKEAKDARRKLIITDGVFSMDGDLAPLPEIVELAEKYNAMVMVDDAHGEGVLGSHGRGIVDHFGLHGRVDIEIGTLSKAFGVLGGYIAGKKELIDYLKQKARPFLFSSPLSPADTAAALEATKILQESDERVKRLWDNAKYFKEEMKKLGFDTGESETPITPVMLYDAKLSTQFSKELFEEGIFAQSIGYPTVPKGKARIRVMISAVHTKEDLDFALEKFEKVGKKLGVI</sequence>
<keyword id="KW-0012">Acyltransferase</keyword>
<keyword id="KW-0093">Biotin biosynthesis</keyword>
<keyword id="KW-0663">Pyridoxal phosphate</keyword>
<keyword id="KW-0808">Transferase</keyword>
<name>BIOF_THEM4</name>
<evidence type="ECO:0000250" key="1">
    <source>
        <dbReference type="UniProtKB" id="P12998"/>
    </source>
</evidence>
<protein>
    <recommendedName>
        <fullName evidence="1">8-amino-7-oxononanoate synthase</fullName>
        <shortName evidence="1">AONS</shortName>
        <ecNumber evidence="1">2.3.1.47</ecNumber>
    </recommendedName>
    <alternativeName>
        <fullName evidence="1">7-keto-8-amino-pelargonic acid synthase</fullName>
        <shortName evidence="1">7-KAP synthase</shortName>
        <shortName evidence="1">KAPA synthase</shortName>
    </alternativeName>
    <alternativeName>
        <fullName evidence="1">8-amino-7-ketopelargonate synthase</fullName>
    </alternativeName>
</protein>
<organism>
    <name type="scientific">Thermosipho melanesiensis (strain DSM 12029 / CIP 104789 / BI429)</name>
    <dbReference type="NCBI Taxonomy" id="391009"/>
    <lineage>
        <taxon>Bacteria</taxon>
        <taxon>Thermotogati</taxon>
        <taxon>Thermotogota</taxon>
        <taxon>Thermotogae</taxon>
        <taxon>Thermotogales</taxon>
        <taxon>Fervidobacteriaceae</taxon>
        <taxon>Thermosipho</taxon>
    </lineage>
</organism>
<gene>
    <name evidence="1" type="primary">bioF</name>
    <name type="ordered locus">Tmel_1346</name>
</gene>
<accession>A6LMP4</accession>
<dbReference type="EC" id="2.3.1.47" evidence="1"/>
<dbReference type="EMBL" id="CP000716">
    <property type="protein sequence ID" value="ABR31195.1"/>
    <property type="molecule type" value="Genomic_DNA"/>
</dbReference>
<dbReference type="RefSeq" id="WP_012057554.1">
    <property type="nucleotide sequence ID" value="NC_009616.1"/>
</dbReference>
<dbReference type="SMR" id="A6LMP4"/>
<dbReference type="STRING" id="391009.Tmel_1346"/>
<dbReference type="KEGG" id="tme:Tmel_1346"/>
<dbReference type="eggNOG" id="COG0156">
    <property type="taxonomic scope" value="Bacteria"/>
</dbReference>
<dbReference type="HOGENOM" id="CLU_015846_11_0_0"/>
<dbReference type="OrthoDB" id="9807157at2"/>
<dbReference type="UniPathway" id="UPA00078"/>
<dbReference type="Proteomes" id="UP000001110">
    <property type="component" value="Chromosome"/>
</dbReference>
<dbReference type="GO" id="GO:0008710">
    <property type="term" value="F:8-amino-7-oxononanoate synthase activity"/>
    <property type="evidence" value="ECO:0000250"/>
    <property type="project" value="UniProtKB"/>
</dbReference>
<dbReference type="GO" id="GO:0008890">
    <property type="term" value="F:glycine C-acetyltransferase activity"/>
    <property type="evidence" value="ECO:0000250"/>
    <property type="project" value="UniProtKB"/>
</dbReference>
<dbReference type="GO" id="GO:0030170">
    <property type="term" value="F:pyridoxal phosphate binding"/>
    <property type="evidence" value="ECO:0000250"/>
    <property type="project" value="UniProtKB"/>
</dbReference>
<dbReference type="GO" id="GO:0009102">
    <property type="term" value="P:biotin biosynthetic process"/>
    <property type="evidence" value="ECO:0000250"/>
    <property type="project" value="UniProtKB"/>
</dbReference>
<dbReference type="CDD" id="cd06454">
    <property type="entry name" value="KBL_like"/>
    <property type="match status" value="1"/>
</dbReference>
<dbReference type="FunFam" id="3.90.1150.10:FF:000004">
    <property type="entry name" value="2-amino-3-ketobutyrate coenzyme A ligase"/>
    <property type="match status" value="1"/>
</dbReference>
<dbReference type="FunFam" id="3.40.640.10:FF:000006">
    <property type="entry name" value="5-aminolevulinate synthase, mitochondrial"/>
    <property type="match status" value="1"/>
</dbReference>
<dbReference type="Gene3D" id="3.90.1150.10">
    <property type="entry name" value="Aspartate Aminotransferase, domain 1"/>
    <property type="match status" value="1"/>
</dbReference>
<dbReference type="Gene3D" id="3.40.640.10">
    <property type="entry name" value="Type I PLP-dependent aspartate aminotransferase-like (Major domain)"/>
    <property type="match status" value="1"/>
</dbReference>
<dbReference type="InterPro" id="IPR001917">
    <property type="entry name" value="Aminotrans_II_pyridoxalP_BS"/>
</dbReference>
<dbReference type="InterPro" id="IPR004839">
    <property type="entry name" value="Aminotransferase_I/II_large"/>
</dbReference>
<dbReference type="InterPro" id="IPR050087">
    <property type="entry name" value="AON_synthase_class-II"/>
</dbReference>
<dbReference type="InterPro" id="IPR010962">
    <property type="entry name" value="AONS_Archaea/Firmicutes"/>
</dbReference>
<dbReference type="InterPro" id="IPR004723">
    <property type="entry name" value="AONS_Archaea/Proteobacteria"/>
</dbReference>
<dbReference type="InterPro" id="IPR015424">
    <property type="entry name" value="PyrdxlP-dep_Trfase"/>
</dbReference>
<dbReference type="InterPro" id="IPR015421">
    <property type="entry name" value="PyrdxlP-dep_Trfase_major"/>
</dbReference>
<dbReference type="InterPro" id="IPR015422">
    <property type="entry name" value="PyrdxlP-dep_Trfase_small"/>
</dbReference>
<dbReference type="NCBIfam" id="TIGR00858">
    <property type="entry name" value="bioF"/>
    <property type="match status" value="1"/>
</dbReference>
<dbReference type="NCBIfam" id="TIGR01825">
    <property type="entry name" value="gly_Cac_T_rel"/>
    <property type="match status" value="1"/>
</dbReference>
<dbReference type="NCBIfam" id="NF005394">
    <property type="entry name" value="PRK06939.1"/>
    <property type="match status" value="1"/>
</dbReference>
<dbReference type="PANTHER" id="PTHR13693">
    <property type="entry name" value="CLASS II AMINOTRANSFERASE/8-AMINO-7-OXONONANOATE SYNTHASE"/>
    <property type="match status" value="1"/>
</dbReference>
<dbReference type="PANTHER" id="PTHR13693:SF3">
    <property type="entry name" value="LD36009P"/>
    <property type="match status" value="1"/>
</dbReference>
<dbReference type="Pfam" id="PF00155">
    <property type="entry name" value="Aminotran_1_2"/>
    <property type="match status" value="1"/>
</dbReference>
<dbReference type="SUPFAM" id="SSF53383">
    <property type="entry name" value="PLP-dependent transferases"/>
    <property type="match status" value="1"/>
</dbReference>
<dbReference type="PROSITE" id="PS00599">
    <property type="entry name" value="AA_TRANSFER_CLASS_2"/>
    <property type="match status" value="1"/>
</dbReference>